<name>TRUD_HYDCU</name>
<comment type="function">
    <text evidence="1">Responsible for synthesis of pseudouridine from uracil-13 in transfer RNAs.</text>
</comment>
<comment type="catalytic activity">
    <reaction evidence="1">
        <text>uridine(13) in tRNA = pseudouridine(13) in tRNA</text>
        <dbReference type="Rhea" id="RHEA:42540"/>
        <dbReference type="Rhea" id="RHEA-COMP:10105"/>
        <dbReference type="Rhea" id="RHEA-COMP:10106"/>
        <dbReference type="ChEBI" id="CHEBI:65314"/>
        <dbReference type="ChEBI" id="CHEBI:65315"/>
        <dbReference type="EC" id="5.4.99.27"/>
    </reaction>
</comment>
<comment type="similarity">
    <text evidence="1">Belongs to the pseudouridine synthase TruD family.</text>
</comment>
<evidence type="ECO:0000255" key="1">
    <source>
        <dbReference type="HAMAP-Rule" id="MF_01082"/>
    </source>
</evidence>
<keyword id="KW-0413">Isomerase</keyword>
<keyword id="KW-0819">tRNA processing</keyword>
<dbReference type="EC" id="5.4.99.27" evidence="1"/>
<dbReference type="EMBL" id="CP000109">
    <property type="protein sequence ID" value="ABB40812.1"/>
    <property type="molecule type" value="Genomic_DNA"/>
</dbReference>
<dbReference type="SMR" id="Q31J61"/>
<dbReference type="STRING" id="317025.Tcr_0216"/>
<dbReference type="KEGG" id="tcx:Tcr_0216"/>
<dbReference type="eggNOG" id="COG0585">
    <property type="taxonomic scope" value="Bacteria"/>
</dbReference>
<dbReference type="HOGENOM" id="CLU_005281_4_0_6"/>
<dbReference type="OrthoDB" id="1550679at2"/>
<dbReference type="GO" id="GO:0005829">
    <property type="term" value="C:cytosol"/>
    <property type="evidence" value="ECO:0007669"/>
    <property type="project" value="TreeGrafter"/>
</dbReference>
<dbReference type="GO" id="GO:0003723">
    <property type="term" value="F:RNA binding"/>
    <property type="evidence" value="ECO:0007669"/>
    <property type="project" value="InterPro"/>
</dbReference>
<dbReference type="GO" id="GO:0160150">
    <property type="term" value="F:tRNA pseudouridine(13) synthase activity"/>
    <property type="evidence" value="ECO:0007669"/>
    <property type="project" value="UniProtKB-EC"/>
</dbReference>
<dbReference type="GO" id="GO:0031119">
    <property type="term" value="P:tRNA pseudouridine synthesis"/>
    <property type="evidence" value="ECO:0007669"/>
    <property type="project" value="UniProtKB-UniRule"/>
</dbReference>
<dbReference type="CDD" id="cd02575">
    <property type="entry name" value="PseudoU_synth_EcTruD"/>
    <property type="match status" value="1"/>
</dbReference>
<dbReference type="Gene3D" id="3.30.2350.20">
    <property type="entry name" value="TruD, catalytic domain"/>
    <property type="match status" value="1"/>
</dbReference>
<dbReference type="Gene3D" id="3.30.2340.10">
    <property type="entry name" value="TruD, insertion domain"/>
    <property type="match status" value="1"/>
</dbReference>
<dbReference type="HAMAP" id="MF_01082">
    <property type="entry name" value="TruD"/>
    <property type="match status" value="1"/>
</dbReference>
<dbReference type="InterPro" id="IPR020103">
    <property type="entry name" value="PsdUridine_synth_cat_dom_sf"/>
</dbReference>
<dbReference type="InterPro" id="IPR001656">
    <property type="entry name" value="PsdUridine_synth_TruD"/>
</dbReference>
<dbReference type="InterPro" id="IPR011760">
    <property type="entry name" value="PsdUridine_synth_TruD_insert"/>
</dbReference>
<dbReference type="InterPro" id="IPR042214">
    <property type="entry name" value="TruD_catalytic"/>
</dbReference>
<dbReference type="InterPro" id="IPR043165">
    <property type="entry name" value="TruD_insert_sf"/>
</dbReference>
<dbReference type="InterPro" id="IPR050170">
    <property type="entry name" value="TruD_pseudoU_synthase"/>
</dbReference>
<dbReference type="NCBIfam" id="NF002153">
    <property type="entry name" value="PRK00984.1-2"/>
    <property type="match status" value="1"/>
</dbReference>
<dbReference type="NCBIfam" id="TIGR00094">
    <property type="entry name" value="tRNA_TruD_broad"/>
    <property type="match status" value="1"/>
</dbReference>
<dbReference type="PANTHER" id="PTHR47811">
    <property type="entry name" value="TRNA PSEUDOURIDINE SYNTHASE D"/>
    <property type="match status" value="1"/>
</dbReference>
<dbReference type="PANTHER" id="PTHR47811:SF1">
    <property type="entry name" value="TRNA PSEUDOURIDINE SYNTHASE D"/>
    <property type="match status" value="1"/>
</dbReference>
<dbReference type="Pfam" id="PF01142">
    <property type="entry name" value="TruD"/>
    <property type="match status" value="2"/>
</dbReference>
<dbReference type="SUPFAM" id="SSF55120">
    <property type="entry name" value="Pseudouridine synthase"/>
    <property type="match status" value="1"/>
</dbReference>
<dbReference type="PROSITE" id="PS50984">
    <property type="entry name" value="TRUD"/>
    <property type="match status" value="1"/>
</dbReference>
<proteinExistence type="inferred from homology"/>
<feature type="chain" id="PRO_0000230154" description="tRNA pseudouridine synthase D">
    <location>
        <begin position="1"/>
        <end position="346"/>
    </location>
</feature>
<feature type="domain" description="TRUD" evidence="1">
    <location>
        <begin position="159"/>
        <end position="305"/>
    </location>
</feature>
<feature type="active site" description="Nucleophile" evidence="1">
    <location>
        <position position="83"/>
    </location>
</feature>
<organism>
    <name type="scientific">Hydrogenovibrio crunogenus (strain DSM 25203 / XCL-2)</name>
    <name type="common">Thiomicrospira crunogena</name>
    <dbReference type="NCBI Taxonomy" id="317025"/>
    <lineage>
        <taxon>Bacteria</taxon>
        <taxon>Pseudomonadati</taxon>
        <taxon>Pseudomonadota</taxon>
        <taxon>Gammaproteobacteria</taxon>
        <taxon>Thiotrichales</taxon>
        <taxon>Piscirickettsiaceae</taxon>
        <taxon>Hydrogenovibrio</taxon>
    </lineage>
</organism>
<reference key="1">
    <citation type="journal article" date="2006" name="PLoS Biol.">
        <title>The genome of deep-sea vent chemolithoautotroph Thiomicrospira crunogena XCL-2.</title>
        <authorList>
            <person name="Scott K.M."/>
            <person name="Sievert S.M."/>
            <person name="Abril F.N."/>
            <person name="Ball L.A."/>
            <person name="Barrett C.J."/>
            <person name="Blake R.A."/>
            <person name="Boller A.J."/>
            <person name="Chain P.S.G."/>
            <person name="Clark J.A."/>
            <person name="Davis C.R."/>
            <person name="Detter C."/>
            <person name="Do K.F."/>
            <person name="Dobrinski K.P."/>
            <person name="Faza B.I."/>
            <person name="Fitzpatrick K.A."/>
            <person name="Freyermuth S.K."/>
            <person name="Harmer T.L."/>
            <person name="Hauser L.J."/>
            <person name="Huegler M."/>
            <person name="Kerfeld C.A."/>
            <person name="Klotz M.G."/>
            <person name="Kong W.W."/>
            <person name="Land M."/>
            <person name="Lapidus A."/>
            <person name="Larimer F.W."/>
            <person name="Longo D.L."/>
            <person name="Lucas S."/>
            <person name="Malfatti S.A."/>
            <person name="Massey S.E."/>
            <person name="Martin D.D."/>
            <person name="McCuddin Z."/>
            <person name="Meyer F."/>
            <person name="Moore J.L."/>
            <person name="Ocampo L.H. Jr."/>
            <person name="Paul J.H."/>
            <person name="Paulsen I.T."/>
            <person name="Reep D.K."/>
            <person name="Ren Q."/>
            <person name="Ross R.L."/>
            <person name="Sato P.Y."/>
            <person name="Thomas P."/>
            <person name="Tinkham L.E."/>
            <person name="Zeruth G.T."/>
        </authorList>
    </citation>
    <scope>NUCLEOTIDE SEQUENCE [LARGE SCALE GENOMIC DNA]</scope>
    <source>
        <strain>DSM 25203 / XCL-2</strain>
    </source>
</reference>
<protein>
    <recommendedName>
        <fullName evidence="1">tRNA pseudouridine synthase D</fullName>
        <ecNumber evidence="1">5.4.99.27</ecNumber>
    </recommendedName>
    <alternativeName>
        <fullName evidence="1">tRNA pseudouridine(13) synthase</fullName>
    </alternativeName>
    <alternativeName>
        <fullName evidence="1">tRNA pseudouridylate synthase D</fullName>
    </alternativeName>
    <alternativeName>
        <fullName evidence="1">tRNA-uridine isomerase D</fullName>
    </alternativeName>
</protein>
<sequence length="346" mass="38935">MPNPISLSHFAFAYGRPENTAVLKAEPADFQVDEHIAYTLSGEGEHLWVWVQKIGQNTDWVAKQIASWAGITAKEMGVAGKKDRQAITRQWMSLHLPGKQAPDIGSLDVPGVTLLKAMRHHRKLQTGGLSGNRFTLVLREINGNLDQIETRLQKIAGKGVPNYFGEQRFGNDFQNLAKATALFQGQIKSPKRHQKSLYISAARSWIFNEILSQRVRQGTWNRAISGDVFQLEGSQKWFADDSDPSLSKRVEEKGLHPTGALTGRGVLPSQSDAFQVEQAVLEKHPFWQAGLEKLGLKQERRALRVLPKEMHWEWLDQQTLSVGFDLPAGSYATMVMRELFEVKLED</sequence>
<accession>Q31J61</accession>
<gene>
    <name evidence="1" type="primary">truD</name>
    <name type="ordered locus">Tcr_0216</name>
</gene>